<comment type="function">
    <text evidence="1 3 4">Thiol protease which is believed to participate in intracellular degradation and turnover of proteins (By similarity). Cleaves matrix extracellular phosphoglycoprotein MEPE (By similarity). Involved in the solubilization of cross-linked TG/thyroglobulin in the thyroid follicle lumen (By similarity). Has also been implicated in tumor invasion and metastasis (By similarity).</text>
</comment>
<comment type="catalytic activity">
    <reaction evidence="3">
        <text>Hydrolysis of proteins with broad specificity for peptide bonds. Preferentially cleaves -Arg-Arg-|-Xaa bonds in small molecule substrates (thus differing from cathepsin L). In addition to being an endopeptidase, shows peptidyl-dipeptidase activity, liberating C-terminal dipeptides.</text>
        <dbReference type="EC" id="3.4.22.1"/>
    </reaction>
</comment>
<comment type="subunit">
    <text evidence="3">Dimer of a heavy chain and a light chain cross-linked by a disulfide bond. Interacts with SRPX2. Directly interacts with SHKBP1.</text>
</comment>
<comment type="subcellular location">
    <subcellularLocation>
        <location evidence="4">Lysosome</location>
    </subcellularLocation>
    <subcellularLocation>
        <location evidence="3">Melanosome</location>
    </subcellularLocation>
    <subcellularLocation>
        <location evidence="4">Secreted</location>
        <location evidence="4">Extracellular space</location>
    </subcellularLocation>
    <subcellularLocation>
        <location evidence="4">Apical cell membrane</location>
        <topology evidence="4">Peripheral membrane protein</topology>
        <orientation evidence="4">Extracellular side</orientation>
    </subcellularLocation>
    <text evidence="4">Localizes to the lumen of thyroid follicles and to the apical membrane of thyroid epithelial cells.</text>
</comment>
<comment type="similarity">
    <text evidence="6 7 8">Belongs to the peptidase C1 family.</text>
</comment>
<dbReference type="EC" id="3.4.22.1" evidence="3"/>
<dbReference type="EMBL" id="KC699918">
    <property type="protein sequence ID" value="AGQ42753.1"/>
    <property type="molecule type" value="mRNA"/>
</dbReference>
<dbReference type="EMBL" id="AMGL01051277">
    <property type="status" value="NOT_ANNOTATED_CDS"/>
    <property type="molecule type" value="Genomic_DNA"/>
</dbReference>
<dbReference type="RefSeq" id="NP_001295516.1">
    <property type="nucleotide sequence ID" value="NM_001308587.1"/>
</dbReference>
<dbReference type="RefSeq" id="XP_004004501.1">
    <property type="nucleotide sequence ID" value="XM_004004452.4"/>
</dbReference>
<dbReference type="RefSeq" id="XP_011984446.1">
    <property type="nucleotide sequence ID" value="XM_012129056.2"/>
</dbReference>
<dbReference type="RefSeq" id="XP_011984453.1">
    <property type="nucleotide sequence ID" value="XM_012129063.2"/>
</dbReference>
<dbReference type="RefSeq" id="XP_042098606.1">
    <property type="nucleotide sequence ID" value="XM_042242672.1"/>
</dbReference>
<dbReference type="RefSeq" id="XP_042098608.1">
    <property type="nucleotide sequence ID" value="XM_042242674.1"/>
</dbReference>
<dbReference type="RefSeq" id="XP_042098609.1">
    <property type="nucleotide sequence ID" value="XM_042242675.1"/>
</dbReference>
<dbReference type="RefSeq" id="XP_042098610.1">
    <property type="nucleotide sequence ID" value="XM_042242676.1"/>
</dbReference>
<dbReference type="RefSeq" id="XP_042098611.1">
    <property type="nucleotide sequence ID" value="XM_042242677.1"/>
</dbReference>
<dbReference type="RefSeq" id="XP_042098612.1">
    <property type="nucleotide sequence ID" value="XM_042242678.1"/>
</dbReference>
<dbReference type="RefSeq" id="XP_060264785.1">
    <property type="nucleotide sequence ID" value="XM_060408802.1"/>
</dbReference>
<dbReference type="RefSeq" id="XP_060264786.1">
    <property type="nucleotide sequence ID" value="XM_060408803.1"/>
</dbReference>
<dbReference type="RefSeq" id="XP_060264787.1">
    <property type="nucleotide sequence ID" value="XM_060408804.1"/>
</dbReference>
<dbReference type="RefSeq" id="XP_060264788.1">
    <property type="nucleotide sequence ID" value="XM_060408805.1"/>
</dbReference>
<dbReference type="RefSeq" id="XP_060264789.1">
    <property type="nucleotide sequence ID" value="XM_060408806.1"/>
</dbReference>
<dbReference type="RefSeq" id="XP_060264790.1">
    <property type="nucleotide sequence ID" value="XM_060408807.1"/>
</dbReference>
<dbReference type="RefSeq" id="XP_060264791.1">
    <property type="nucleotide sequence ID" value="XM_060408808.1"/>
</dbReference>
<dbReference type="SMR" id="P83205"/>
<dbReference type="STRING" id="9940.ENSOARP00000016378"/>
<dbReference type="MEROPS" id="C01.060"/>
<dbReference type="GlyCosmos" id="P83205">
    <property type="glycosylation" value="1 site, No reported glycans"/>
</dbReference>
<dbReference type="PaxDb" id="9940-ENSOARP00000016378"/>
<dbReference type="Ensembl" id="ENSOART00040019415">
    <property type="protein sequence ID" value="ENSOARP00040009399"/>
    <property type="gene ID" value="ENSOARG00040012047"/>
</dbReference>
<dbReference type="Ensembl" id="ENSOART00180005027">
    <property type="protein sequence ID" value="ENSOARP00180002483"/>
    <property type="gene ID" value="ENSOARG00180003069"/>
</dbReference>
<dbReference type="Ensembl" id="ENSOART00215035463">
    <property type="protein sequence ID" value="ENSOARP00215018455"/>
    <property type="gene ID" value="ENSOARG00215021240"/>
</dbReference>
<dbReference type="Ensembl" id="ENSOART00220003948">
    <property type="protein sequence ID" value="ENSOARP00220002695"/>
    <property type="gene ID" value="ENSOARG00220002120"/>
</dbReference>
<dbReference type="Ensembl" id="ENSOART00225078598">
    <property type="protein sequence ID" value="ENSOARP00225040654"/>
    <property type="gene ID" value="ENSOARG00225047274"/>
</dbReference>
<dbReference type="Ensembl" id="ENSOART00260031873">
    <property type="protein sequence ID" value="ENSOARP00260016256"/>
    <property type="gene ID" value="ENSOARG00260019519"/>
</dbReference>
<dbReference type="GeneID" id="780470"/>
<dbReference type="KEGG" id="oas:780470"/>
<dbReference type="CTD" id="1508"/>
<dbReference type="eggNOG" id="KOG1543">
    <property type="taxonomic scope" value="Eukaryota"/>
</dbReference>
<dbReference type="HOGENOM" id="CLU_012184_3_3_1"/>
<dbReference type="OMA" id="DEKIPYW"/>
<dbReference type="OrthoDB" id="640249at2759"/>
<dbReference type="Proteomes" id="UP000002356">
    <property type="component" value="Chromosome 2"/>
</dbReference>
<dbReference type="Bgee" id="ENSOARG00000015263">
    <property type="expression patterns" value="Expressed in thyroid gland and 53 other cell types or tissues"/>
</dbReference>
<dbReference type="GO" id="GO:0016324">
    <property type="term" value="C:apical plasma membrane"/>
    <property type="evidence" value="ECO:0007669"/>
    <property type="project" value="UniProtKB-SubCell"/>
</dbReference>
<dbReference type="GO" id="GO:0009897">
    <property type="term" value="C:external side of plasma membrane"/>
    <property type="evidence" value="ECO:0007669"/>
    <property type="project" value="Ensembl"/>
</dbReference>
<dbReference type="GO" id="GO:0005615">
    <property type="term" value="C:extracellular space"/>
    <property type="evidence" value="ECO:0007669"/>
    <property type="project" value="Ensembl"/>
</dbReference>
<dbReference type="GO" id="GO:0005764">
    <property type="term" value="C:lysosome"/>
    <property type="evidence" value="ECO:0007669"/>
    <property type="project" value="UniProtKB-SubCell"/>
</dbReference>
<dbReference type="GO" id="GO:0042470">
    <property type="term" value="C:melanosome"/>
    <property type="evidence" value="ECO:0007669"/>
    <property type="project" value="UniProtKB-SubCell"/>
</dbReference>
<dbReference type="GO" id="GO:1904090">
    <property type="term" value="C:peptidase inhibitor complex"/>
    <property type="evidence" value="ECO:0007669"/>
    <property type="project" value="Ensembl"/>
</dbReference>
<dbReference type="GO" id="GO:0048471">
    <property type="term" value="C:perinuclear region of cytoplasm"/>
    <property type="evidence" value="ECO:0007669"/>
    <property type="project" value="Ensembl"/>
</dbReference>
<dbReference type="GO" id="GO:0005518">
    <property type="term" value="F:collagen binding"/>
    <property type="evidence" value="ECO:0007669"/>
    <property type="project" value="Ensembl"/>
</dbReference>
<dbReference type="GO" id="GO:0004197">
    <property type="term" value="F:cysteine-type endopeptidase activity"/>
    <property type="evidence" value="ECO:0007669"/>
    <property type="project" value="UniProtKB-EC"/>
</dbReference>
<dbReference type="GO" id="GO:0004175">
    <property type="term" value="F:endopeptidase activity"/>
    <property type="evidence" value="ECO:0000250"/>
    <property type="project" value="UniProtKB"/>
</dbReference>
<dbReference type="GO" id="GO:0043394">
    <property type="term" value="F:proteoglycan binding"/>
    <property type="evidence" value="ECO:0007669"/>
    <property type="project" value="Ensembl"/>
</dbReference>
<dbReference type="GO" id="GO:0097067">
    <property type="term" value="P:cellular response to thyroid hormone stimulus"/>
    <property type="evidence" value="ECO:0007669"/>
    <property type="project" value="Ensembl"/>
</dbReference>
<dbReference type="GO" id="GO:0030574">
    <property type="term" value="P:collagen catabolic process"/>
    <property type="evidence" value="ECO:0007669"/>
    <property type="project" value="Ensembl"/>
</dbReference>
<dbReference type="GO" id="GO:0046697">
    <property type="term" value="P:decidualization"/>
    <property type="evidence" value="ECO:0007669"/>
    <property type="project" value="Ensembl"/>
</dbReference>
<dbReference type="GO" id="GO:0030855">
    <property type="term" value="P:epithelial cell differentiation"/>
    <property type="evidence" value="ECO:0007669"/>
    <property type="project" value="Ensembl"/>
</dbReference>
<dbReference type="GO" id="GO:0051603">
    <property type="term" value="P:proteolysis involved in protein catabolic process"/>
    <property type="evidence" value="ECO:0007669"/>
    <property type="project" value="Ensembl"/>
</dbReference>
<dbReference type="GO" id="GO:0046718">
    <property type="term" value="P:symbiont entry into host cell"/>
    <property type="evidence" value="ECO:0007669"/>
    <property type="project" value="Ensembl"/>
</dbReference>
<dbReference type="GO" id="GO:0006590">
    <property type="term" value="P:thyroid hormone generation"/>
    <property type="evidence" value="ECO:0007669"/>
    <property type="project" value="Ensembl"/>
</dbReference>
<dbReference type="CDD" id="cd02620">
    <property type="entry name" value="Peptidase_C1A_CathepsinB"/>
    <property type="match status" value="1"/>
</dbReference>
<dbReference type="FunFam" id="3.90.70.10:FF:000031">
    <property type="entry name" value="Cathepsin B"/>
    <property type="match status" value="1"/>
</dbReference>
<dbReference type="Gene3D" id="3.90.70.10">
    <property type="entry name" value="Cysteine proteinases"/>
    <property type="match status" value="1"/>
</dbReference>
<dbReference type="InterPro" id="IPR038765">
    <property type="entry name" value="Papain-like_cys_pep_sf"/>
</dbReference>
<dbReference type="InterPro" id="IPR025661">
    <property type="entry name" value="Pept_asp_AS"/>
</dbReference>
<dbReference type="InterPro" id="IPR000169">
    <property type="entry name" value="Pept_cys_AS"/>
</dbReference>
<dbReference type="InterPro" id="IPR025660">
    <property type="entry name" value="Pept_his_AS"/>
</dbReference>
<dbReference type="InterPro" id="IPR013128">
    <property type="entry name" value="Peptidase_C1A"/>
</dbReference>
<dbReference type="InterPro" id="IPR000668">
    <property type="entry name" value="Peptidase_C1A_C"/>
</dbReference>
<dbReference type="InterPro" id="IPR012599">
    <property type="entry name" value="Propeptide_C1A"/>
</dbReference>
<dbReference type="PANTHER" id="PTHR12411">
    <property type="entry name" value="CYSTEINE PROTEASE FAMILY C1-RELATED"/>
    <property type="match status" value="1"/>
</dbReference>
<dbReference type="Pfam" id="PF00112">
    <property type="entry name" value="Peptidase_C1"/>
    <property type="match status" value="1"/>
</dbReference>
<dbReference type="Pfam" id="PF08127">
    <property type="entry name" value="Propeptide_C1"/>
    <property type="match status" value="1"/>
</dbReference>
<dbReference type="PRINTS" id="PR00705">
    <property type="entry name" value="PAPAIN"/>
</dbReference>
<dbReference type="SMART" id="SM00645">
    <property type="entry name" value="Pept_C1"/>
    <property type="match status" value="1"/>
</dbReference>
<dbReference type="SUPFAM" id="SSF54001">
    <property type="entry name" value="Cysteine proteinases"/>
    <property type="match status" value="1"/>
</dbReference>
<dbReference type="PROSITE" id="PS00640">
    <property type="entry name" value="THIOL_PROTEASE_ASN"/>
    <property type="match status" value="1"/>
</dbReference>
<dbReference type="PROSITE" id="PS00139">
    <property type="entry name" value="THIOL_PROTEASE_CYS"/>
    <property type="match status" value="1"/>
</dbReference>
<dbReference type="PROSITE" id="PS00639">
    <property type="entry name" value="THIOL_PROTEASE_HIS"/>
    <property type="match status" value="1"/>
</dbReference>
<proteinExistence type="evidence at protein level"/>
<feature type="signal peptide" evidence="5">
    <location>
        <begin position="1"/>
        <end position="19"/>
    </location>
</feature>
<feature type="propeptide" id="PRO_0000445804" description="Activation peptide" evidence="9">
    <location>
        <begin position="20"/>
        <end position="79"/>
    </location>
</feature>
<feature type="chain" id="PRO_0000050534" description="Cathepsin B" evidence="5">
    <location>
        <begin position="80"/>
        <end position="335"/>
    </location>
</feature>
<feature type="chain" id="PRO_0000445805" description="Cathepsin B light chain" evidence="3">
    <location>
        <begin position="80"/>
        <end position="126"/>
    </location>
</feature>
<feature type="chain" id="PRO_0000445806" description="Cathepsin B heavy chain" evidence="3">
    <location>
        <begin position="129"/>
        <end position="333"/>
    </location>
</feature>
<feature type="propeptide" id="PRO_0000445807" evidence="2">
    <location>
        <begin position="333"/>
        <end position="335"/>
    </location>
</feature>
<feature type="active site" evidence="6">
    <location>
        <position position="108"/>
    </location>
</feature>
<feature type="active site" evidence="7">
    <location>
        <position position="278"/>
    </location>
</feature>
<feature type="active site" evidence="8">
    <location>
        <position position="298"/>
    </location>
</feature>
<feature type="modified residue" description="N6-acetyllysine" evidence="4">
    <location>
        <position position="220"/>
    </location>
</feature>
<feature type="glycosylation site" description="N-linked (GlcNAc...) asparagine" evidence="5">
    <location>
        <position position="192"/>
    </location>
</feature>
<feature type="disulfide bond" evidence="3">
    <location>
        <begin position="93"/>
        <end position="122"/>
    </location>
</feature>
<feature type="disulfide bond" evidence="3">
    <location>
        <begin position="105"/>
        <end position="150"/>
    </location>
</feature>
<feature type="disulfide bond" evidence="3">
    <location>
        <begin position="141"/>
        <end position="207"/>
    </location>
</feature>
<feature type="disulfide bond" evidence="3">
    <location>
        <begin position="142"/>
        <end position="146"/>
    </location>
</feature>
<feature type="disulfide bond" evidence="3">
    <location>
        <begin position="179"/>
        <end position="211"/>
    </location>
</feature>
<feature type="disulfide bond" evidence="3">
    <location>
        <begin position="187"/>
        <end position="198"/>
    </location>
</feature>
<feature type="sequence conflict" description="In Ref. 1; AGQ42753." evidence="10" ref="1">
    <original>AHQH</original>
    <variation>THQY</variation>
    <location>
        <begin position="332"/>
        <end position="335"/>
    </location>
</feature>
<organism evidence="10">
    <name type="scientific">Ovis aries</name>
    <name type="common">Sheep</name>
    <dbReference type="NCBI Taxonomy" id="9940"/>
    <lineage>
        <taxon>Eukaryota</taxon>
        <taxon>Metazoa</taxon>
        <taxon>Chordata</taxon>
        <taxon>Craniata</taxon>
        <taxon>Vertebrata</taxon>
        <taxon>Euteleostomi</taxon>
        <taxon>Mammalia</taxon>
        <taxon>Eutheria</taxon>
        <taxon>Laurasiatheria</taxon>
        <taxon>Artiodactyla</taxon>
        <taxon>Ruminantia</taxon>
        <taxon>Pecora</taxon>
        <taxon>Bovidae</taxon>
        <taxon>Caprinae</taxon>
        <taxon>Ovis</taxon>
    </lineage>
</organism>
<accession>P83205</accession>
<accession>S5FR89</accession>
<accession>W5Q0Z2</accession>
<sequence length="335" mass="36725">MWQLLATLSCLLVLTSARSSLHFPPLSDEMVNYVNKQNTTWKAGHNFYNVDLSYVKKLCGAILGGPKLPQRDAFAADMVLPDSFDAREQWPNCPTIKEIRDQGSCGSCWAFGAVEAISDRICIHSKGRVNVEVSAEDMLTCCGSECGDGCNGGFPSGAWNFWTKKGLVSGGLYDSHVGCRPYSIPPCEHHVNGSRPPCTGEGDTPKCSKICEPGYSPSYKDDKHFGCSSYSVSSNEKEIMAEIYKNGPVEGAFSVYSDFLLYKSGVYQHVSGEMMGGHAIRILGWGVENDTPYWLVGNSWNTDWGDKGFFKILRGQDHCGIESEIVAGMPCAHQH</sequence>
<name>CATB_SHEEP</name>
<protein>
    <recommendedName>
        <fullName>Cathepsin B</fullName>
        <ecNumber evidence="3">3.4.22.1</ecNumber>
    </recommendedName>
    <alternativeName>
        <fullName>Cathepsin B1</fullName>
    </alternativeName>
    <component>
        <recommendedName>
            <fullName evidence="3">Cathepsin B light chain</fullName>
        </recommendedName>
    </component>
    <component>
        <recommendedName>
            <fullName evidence="3">Cathepsin B heavy chain</fullName>
        </recommendedName>
    </component>
</protein>
<gene>
    <name type="primary">CTSB</name>
</gene>
<reference key="1">
    <citation type="submission" date="2013-02" db="EMBL/GenBank/DDBJ databases">
        <authorList>
            <person name="Qi X."/>
            <person name="Tian S."/>
        </authorList>
    </citation>
    <scope>NUCLEOTIDE SEQUENCE [MRNA]</scope>
</reference>
<reference key="2">
    <citation type="journal article" date="2010" name="Anim. Genet.">
        <title>The sheep genome reference sequence: a work in progress.</title>
        <authorList>
            <person name="Archibald A.L."/>
            <person name="Cockett N.E."/>
            <person name="Dalrymple B.P."/>
            <person name="Faraut T."/>
            <person name="Kijas J.W."/>
            <person name="Maddox J.F."/>
            <person name="McEwan J.C."/>
            <person name="Hutton Oddy V."/>
            <person name="Raadsma H.W."/>
            <person name="Wade C."/>
            <person name="Wang J."/>
            <person name="Wang W."/>
            <person name="Xun X."/>
        </authorList>
    </citation>
    <scope>NUCLEOTIDE SEQUENCE [LARGE SCALE GENOMIC DNA]</scope>
    <source>
        <strain>Texel</strain>
    </source>
</reference>
<reference key="3">
    <citation type="journal article" date="2003" name="Mol. Reprod. Dev.">
        <title>Isolation and partial characterization of three pregnancy-associated glycoproteins from the ewe placenta.</title>
        <authorList>
            <person name="El Amiri B."/>
            <person name="Remy B."/>
            <person name="Sousa N.M."/>
            <person name="Joris B."/>
            <person name="Ottiers N.G."/>
            <person name="Perenyi Z."/>
            <person name="Mboko H.B."/>
            <person name="Beckers J.-F.M.P."/>
        </authorList>
    </citation>
    <scope>PROTEIN SEQUENCE OF 80-89</scope>
    <source>
        <tissue>Placenta</tissue>
    </source>
</reference>
<evidence type="ECO:0000250" key="1">
    <source>
        <dbReference type="UniProtKB" id="P00787"/>
    </source>
</evidence>
<evidence type="ECO:0000250" key="2">
    <source>
        <dbReference type="UniProtKB" id="P07688"/>
    </source>
</evidence>
<evidence type="ECO:0000250" key="3">
    <source>
        <dbReference type="UniProtKB" id="P07858"/>
    </source>
</evidence>
<evidence type="ECO:0000250" key="4">
    <source>
        <dbReference type="UniProtKB" id="P10605"/>
    </source>
</evidence>
<evidence type="ECO:0000255" key="5"/>
<evidence type="ECO:0000255" key="6">
    <source>
        <dbReference type="PROSITE-ProRule" id="PRU10088"/>
    </source>
</evidence>
<evidence type="ECO:0000255" key="7">
    <source>
        <dbReference type="PROSITE-ProRule" id="PRU10089"/>
    </source>
</evidence>
<evidence type="ECO:0000255" key="8">
    <source>
        <dbReference type="PROSITE-ProRule" id="PRU10090"/>
    </source>
</evidence>
<evidence type="ECO:0000269" key="9">
    <source>
    </source>
</evidence>
<evidence type="ECO:0000305" key="10"/>
<keyword id="KW-0007">Acetylation</keyword>
<keyword id="KW-1003">Cell membrane</keyword>
<keyword id="KW-0903">Direct protein sequencing</keyword>
<keyword id="KW-1015">Disulfide bond</keyword>
<keyword id="KW-0325">Glycoprotein</keyword>
<keyword id="KW-0378">Hydrolase</keyword>
<keyword id="KW-0458">Lysosome</keyword>
<keyword id="KW-0472">Membrane</keyword>
<keyword id="KW-0645">Protease</keyword>
<keyword id="KW-1185">Reference proteome</keyword>
<keyword id="KW-0964">Secreted</keyword>
<keyword id="KW-0732">Signal</keyword>
<keyword id="KW-0788">Thiol protease</keyword>
<keyword id="KW-0865">Zymogen</keyword>